<accession>A8AAK3</accession>
<feature type="chain" id="PRO_1000063070" description="Imidazole glycerol phosphate synthase subunit HisF">
    <location>
        <begin position="1"/>
        <end position="255"/>
    </location>
</feature>
<feature type="active site" evidence="1">
    <location>
        <position position="12"/>
    </location>
</feature>
<feature type="active site" evidence="1">
    <location>
        <position position="131"/>
    </location>
</feature>
<gene>
    <name evidence="1" type="primary">hisF</name>
    <name type="ordered locus">Igni_0773</name>
</gene>
<sequence>MPLTKRIIPCLDVKDGRVVKGVSFQNLRDAGDPVELAAYYQEQGADEIVFLDISATPEGRETMIEVVRRTAENLSIPLTVGGGVRSLEHIEKLLKAGADKVSINTAAVKNPLLITAAAEEFGSQAVVVAIDAKRKGNGWEVYVSAGKVPTGLDAVEWAKKAEELGAGEILLTSIDYDGTQNGYDLELTRAVSEAVKIPVIASGGAGELEHFYAVLTEGKADAALAASVFHYGKFTVGDVKKYLIQRGVPVRPCCW</sequence>
<proteinExistence type="inferred from homology"/>
<organism>
    <name type="scientific">Ignicoccus hospitalis (strain KIN4/I / DSM 18386 / JCM 14125)</name>
    <dbReference type="NCBI Taxonomy" id="453591"/>
    <lineage>
        <taxon>Archaea</taxon>
        <taxon>Thermoproteota</taxon>
        <taxon>Thermoprotei</taxon>
        <taxon>Desulfurococcales</taxon>
        <taxon>Desulfurococcaceae</taxon>
        <taxon>Ignicoccus</taxon>
    </lineage>
</organism>
<evidence type="ECO:0000255" key="1">
    <source>
        <dbReference type="HAMAP-Rule" id="MF_01013"/>
    </source>
</evidence>
<protein>
    <recommendedName>
        <fullName evidence="1">Imidazole glycerol phosphate synthase subunit HisF</fullName>
        <ecNumber evidence="1">4.3.2.10</ecNumber>
    </recommendedName>
    <alternativeName>
        <fullName evidence="1">IGP synthase cyclase subunit</fullName>
    </alternativeName>
    <alternativeName>
        <fullName evidence="1">IGP synthase subunit HisF</fullName>
    </alternativeName>
    <alternativeName>
        <fullName evidence="1">ImGP synthase subunit HisF</fullName>
        <shortName evidence="1">IGPS subunit HisF</shortName>
    </alternativeName>
</protein>
<keyword id="KW-0028">Amino-acid biosynthesis</keyword>
<keyword id="KW-0963">Cytoplasm</keyword>
<keyword id="KW-0368">Histidine biosynthesis</keyword>
<keyword id="KW-0456">Lyase</keyword>
<keyword id="KW-1185">Reference proteome</keyword>
<dbReference type="EC" id="4.3.2.10" evidence="1"/>
<dbReference type="EMBL" id="CP000816">
    <property type="protein sequence ID" value="ABU81955.1"/>
    <property type="molecule type" value="Genomic_DNA"/>
</dbReference>
<dbReference type="RefSeq" id="WP_012122919.1">
    <property type="nucleotide sequence ID" value="NC_009776.1"/>
</dbReference>
<dbReference type="SMR" id="A8AAK3"/>
<dbReference type="STRING" id="453591.Igni_0773"/>
<dbReference type="GeneID" id="5562110"/>
<dbReference type="KEGG" id="iho:Igni_0773"/>
<dbReference type="eggNOG" id="arCOG00617">
    <property type="taxonomic scope" value="Archaea"/>
</dbReference>
<dbReference type="HOGENOM" id="CLU_048577_4_0_2"/>
<dbReference type="OrthoDB" id="6261at2157"/>
<dbReference type="PhylomeDB" id="A8AAK3"/>
<dbReference type="UniPathway" id="UPA00031">
    <property type="reaction ID" value="UER00010"/>
</dbReference>
<dbReference type="Proteomes" id="UP000000262">
    <property type="component" value="Chromosome"/>
</dbReference>
<dbReference type="GO" id="GO:0005737">
    <property type="term" value="C:cytoplasm"/>
    <property type="evidence" value="ECO:0007669"/>
    <property type="project" value="UniProtKB-SubCell"/>
</dbReference>
<dbReference type="GO" id="GO:0000107">
    <property type="term" value="F:imidazoleglycerol-phosphate synthase activity"/>
    <property type="evidence" value="ECO:0007669"/>
    <property type="project" value="UniProtKB-UniRule"/>
</dbReference>
<dbReference type="GO" id="GO:0016829">
    <property type="term" value="F:lyase activity"/>
    <property type="evidence" value="ECO:0007669"/>
    <property type="project" value="UniProtKB-KW"/>
</dbReference>
<dbReference type="GO" id="GO:0000105">
    <property type="term" value="P:L-histidine biosynthetic process"/>
    <property type="evidence" value="ECO:0007669"/>
    <property type="project" value="UniProtKB-UniRule"/>
</dbReference>
<dbReference type="CDD" id="cd04731">
    <property type="entry name" value="HisF"/>
    <property type="match status" value="1"/>
</dbReference>
<dbReference type="FunFam" id="3.20.20.70:FF:000006">
    <property type="entry name" value="Imidazole glycerol phosphate synthase subunit HisF"/>
    <property type="match status" value="1"/>
</dbReference>
<dbReference type="Gene3D" id="3.20.20.70">
    <property type="entry name" value="Aldolase class I"/>
    <property type="match status" value="1"/>
</dbReference>
<dbReference type="HAMAP" id="MF_01013">
    <property type="entry name" value="HisF"/>
    <property type="match status" value="1"/>
</dbReference>
<dbReference type="InterPro" id="IPR013785">
    <property type="entry name" value="Aldolase_TIM"/>
</dbReference>
<dbReference type="InterPro" id="IPR006062">
    <property type="entry name" value="His_biosynth"/>
</dbReference>
<dbReference type="InterPro" id="IPR004651">
    <property type="entry name" value="HisF"/>
</dbReference>
<dbReference type="InterPro" id="IPR050064">
    <property type="entry name" value="IGPS_HisA/HisF"/>
</dbReference>
<dbReference type="InterPro" id="IPR011060">
    <property type="entry name" value="RibuloseP-bd_barrel"/>
</dbReference>
<dbReference type="NCBIfam" id="TIGR00735">
    <property type="entry name" value="hisF"/>
    <property type="match status" value="1"/>
</dbReference>
<dbReference type="PANTHER" id="PTHR21235:SF2">
    <property type="entry name" value="IMIDAZOLE GLYCEROL PHOSPHATE SYNTHASE HISHF"/>
    <property type="match status" value="1"/>
</dbReference>
<dbReference type="PANTHER" id="PTHR21235">
    <property type="entry name" value="IMIDAZOLE GLYCEROL PHOSPHATE SYNTHASE SUBUNIT HISF/H IGP SYNTHASE SUBUNIT HISF/H"/>
    <property type="match status" value="1"/>
</dbReference>
<dbReference type="Pfam" id="PF00977">
    <property type="entry name" value="His_biosynth"/>
    <property type="match status" value="1"/>
</dbReference>
<dbReference type="SUPFAM" id="SSF51366">
    <property type="entry name" value="Ribulose-phoshate binding barrel"/>
    <property type="match status" value="1"/>
</dbReference>
<comment type="function">
    <text evidence="1">IGPS catalyzes the conversion of PRFAR and glutamine to IGP, AICAR and glutamate. The HisF subunit catalyzes the cyclization activity that produces IGP and AICAR from PRFAR using the ammonia provided by the HisH subunit.</text>
</comment>
<comment type="catalytic activity">
    <reaction evidence="1">
        <text>5-[(5-phospho-1-deoxy-D-ribulos-1-ylimino)methylamino]-1-(5-phospho-beta-D-ribosyl)imidazole-4-carboxamide + L-glutamine = D-erythro-1-(imidazol-4-yl)glycerol 3-phosphate + 5-amino-1-(5-phospho-beta-D-ribosyl)imidazole-4-carboxamide + L-glutamate + H(+)</text>
        <dbReference type="Rhea" id="RHEA:24793"/>
        <dbReference type="ChEBI" id="CHEBI:15378"/>
        <dbReference type="ChEBI" id="CHEBI:29985"/>
        <dbReference type="ChEBI" id="CHEBI:58278"/>
        <dbReference type="ChEBI" id="CHEBI:58359"/>
        <dbReference type="ChEBI" id="CHEBI:58475"/>
        <dbReference type="ChEBI" id="CHEBI:58525"/>
        <dbReference type="EC" id="4.3.2.10"/>
    </reaction>
</comment>
<comment type="pathway">
    <text evidence="1">Amino-acid biosynthesis; L-histidine biosynthesis; L-histidine from 5-phospho-alpha-D-ribose 1-diphosphate: step 5/9.</text>
</comment>
<comment type="subunit">
    <text evidence="1">Heterodimer of HisH and HisF.</text>
</comment>
<comment type="subcellular location">
    <subcellularLocation>
        <location evidence="1">Cytoplasm</location>
    </subcellularLocation>
</comment>
<comment type="similarity">
    <text evidence="1">Belongs to the HisA/HisF family.</text>
</comment>
<reference key="1">
    <citation type="journal article" date="2008" name="Genome Biol.">
        <title>A genomic analysis of the archaeal system Ignicoccus hospitalis-Nanoarchaeum equitans.</title>
        <authorList>
            <person name="Podar M."/>
            <person name="Anderson I."/>
            <person name="Makarova K.S."/>
            <person name="Elkins J.G."/>
            <person name="Ivanova N."/>
            <person name="Wall M.A."/>
            <person name="Lykidis A."/>
            <person name="Mavromatis K."/>
            <person name="Sun H."/>
            <person name="Hudson M.E."/>
            <person name="Chen W."/>
            <person name="Deciu C."/>
            <person name="Hutchison D."/>
            <person name="Eads J.R."/>
            <person name="Anderson A."/>
            <person name="Fernandes F."/>
            <person name="Szeto E."/>
            <person name="Lapidus A."/>
            <person name="Kyrpides N.C."/>
            <person name="Saier M.H. Jr."/>
            <person name="Richardson P.M."/>
            <person name="Rachel R."/>
            <person name="Huber H."/>
            <person name="Eisen J.A."/>
            <person name="Koonin E.V."/>
            <person name="Keller M."/>
            <person name="Stetter K.O."/>
        </authorList>
    </citation>
    <scope>NUCLEOTIDE SEQUENCE [LARGE SCALE GENOMIC DNA]</scope>
    <source>
        <strain>KIN4/I / DSM 18386 / JCM 14125</strain>
    </source>
</reference>
<name>HIS6_IGNH4</name>